<reference key="1">
    <citation type="submission" date="2001-01" db="EMBL/GenBank/DDBJ databases">
        <title>The chimpanzee ICAM proteins have been positively selected.</title>
        <authorList>
            <person name="Messier W."/>
            <person name="Walter N.A.R."/>
            <person name="Hink R.L."/>
        </authorList>
    </citation>
    <scope>NUCLEOTIDE SEQUENCE [MRNA]</scope>
    <source>
        <strain>Isolate Kudzu</strain>
        <tissue>Blood</tissue>
    </source>
</reference>
<gene>
    <name type="primary">ICAM2</name>
</gene>
<keyword id="KW-0130">Cell adhesion</keyword>
<keyword id="KW-0966">Cell projection</keyword>
<keyword id="KW-1015">Disulfide bond</keyword>
<keyword id="KW-0325">Glycoprotein</keyword>
<keyword id="KW-0393">Immunoglobulin domain</keyword>
<keyword id="KW-0472">Membrane</keyword>
<keyword id="KW-1185">Reference proteome</keyword>
<keyword id="KW-0677">Repeat</keyword>
<keyword id="KW-0732">Signal</keyword>
<keyword id="KW-0812">Transmembrane</keyword>
<keyword id="KW-1133">Transmembrane helix</keyword>
<organism>
    <name type="scientific">Gorilla gorilla gorilla</name>
    <name type="common">Western lowland gorilla</name>
    <dbReference type="NCBI Taxonomy" id="9595"/>
    <lineage>
        <taxon>Eukaryota</taxon>
        <taxon>Metazoa</taxon>
        <taxon>Chordata</taxon>
        <taxon>Craniata</taxon>
        <taxon>Vertebrata</taxon>
        <taxon>Euteleostomi</taxon>
        <taxon>Mammalia</taxon>
        <taxon>Eutheria</taxon>
        <taxon>Euarchontoglires</taxon>
        <taxon>Primates</taxon>
        <taxon>Haplorrhini</taxon>
        <taxon>Catarrhini</taxon>
        <taxon>Hominidae</taxon>
        <taxon>Gorilla</taxon>
    </lineage>
</organism>
<dbReference type="EMBL" id="AF340051">
    <property type="protein sequence ID" value="AAQ14908.1"/>
    <property type="molecule type" value="mRNA"/>
</dbReference>
<dbReference type="RefSeq" id="NP_001266588.1">
    <property type="nucleotide sequence ID" value="NM_001279659.1"/>
</dbReference>
<dbReference type="RefSeq" id="XP_018881663.3">
    <property type="nucleotide sequence ID" value="XM_019026118.4"/>
</dbReference>
<dbReference type="SMR" id="Q5NKV1"/>
<dbReference type="FunCoup" id="Q5NKV1">
    <property type="interactions" value="418"/>
</dbReference>
<dbReference type="STRING" id="9593.ENSGGOP00000013761"/>
<dbReference type="GlyCosmos" id="Q5NKV1">
    <property type="glycosylation" value="7 sites, No reported glycans"/>
</dbReference>
<dbReference type="Ensembl" id="ENSGGOT00000014155.3">
    <property type="protein sequence ID" value="ENSGGOP00000013761.3"/>
    <property type="gene ID" value="ENSGGOG00000014108.3"/>
</dbReference>
<dbReference type="GeneID" id="101130366"/>
<dbReference type="KEGG" id="ggo:101130366"/>
<dbReference type="CTD" id="3384"/>
<dbReference type="eggNOG" id="ENOG502RZRA">
    <property type="taxonomic scope" value="Eukaryota"/>
</dbReference>
<dbReference type="GeneTree" id="ENSGT00940000161654"/>
<dbReference type="InParanoid" id="Q5NKV1"/>
<dbReference type="OMA" id="QVYEPVQ"/>
<dbReference type="Proteomes" id="UP000001519">
    <property type="component" value="Chromosome 5"/>
</dbReference>
<dbReference type="Bgee" id="ENSGGOG00000014108">
    <property type="expression patterns" value="Expressed in heart and 6 other cell types or tissues"/>
</dbReference>
<dbReference type="GO" id="GO:0032154">
    <property type="term" value="C:cleavage furrow"/>
    <property type="evidence" value="ECO:0007669"/>
    <property type="project" value="Ensembl"/>
</dbReference>
<dbReference type="GO" id="GO:0005902">
    <property type="term" value="C:microvillus"/>
    <property type="evidence" value="ECO:0000250"/>
    <property type="project" value="UniProtKB"/>
</dbReference>
<dbReference type="GO" id="GO:0005886">
    <property type="term" value="C:plasma membrane"/>
    <property type="evidence" value="ECO:0000318"/>
    <property type="project" value="GO_Central"/>
</dbReference>
<dbReference type="GO" id="GO:0001931">
    <property type="term" value="C:uropod"/>
    <property type="evidence" value="ECO:0007669"/>
    <property type="project" value="Ensembl"/>
</dbReference>
<dbReference type="GO" id="GO:0005178">
    <property type="term" value="F:integrin binding"/>
    <property type="evidence" value="ECO:0000318"/>
    <property type="project" value="GO_Central"/>
</dbReference>
<dbReference type="GO" id="GO:0007155">
    <property type="term" value="P:cell adhesion"/>
    <property type="evidence" value="ECO:0000318"/>
    <property type="project" value="GO_Central"/>
</dbReference>
<dbReference type="GO" id="GO:0098609">
    <property type="term" value="P:cell-cell adhesion"/>
    <property type="evidence" value="ECO:0007669"/>
    <property type="project" value="InterPro"/>
</dbReference>
<dbReference type="CDD" id="cd20995">
    <property type="entry name" value="IgI_N_ICAM-2"/>
    <property type="match status" value="1"/>
</dbReference>
<dbReference type="FunFam" id="2.60.40.10:FF:000194">
    <property type="entry name" value="Intercellular adhesion molecule 1"/>
    <property type="match status" value="1"/>
</dbReference>
<dbReference type="FunFam" id="2.60.40.10:FF:000338">
    <property type="entry name" value="intercellular adhesion molecule 5"/>
    <property type="match status" value="1"/>
</dbReference>
<dbReference type="Gene3D" id="2.60.40.10">
    <property type="entry name" value="Immunoglobulins"/>
    <property type="match status" value="2"/>
</dbReference>
<dbReference type="InterPro" id="IPR003988">
    <property type="entry name" value="ICAM"/>
</dbReference>
<dbReference type="InterPro" id="IPR013768">
    <property type="entry name" value="ICAM_N"/>
</dbReference>
<dbReference type="InterPro" id="IPR047012">
    <property type="entry name" value="ICAM_VCAM"/>
</dbReference>
<dbReference type="InterPro" id="IPR003987">
    <property type="entry name" value="ICAM_VCAM_N"/>
</dbReference>
<dbReference type="InterPro" id="IPR036179">
    <property type="entry name" value="Ig-like_dom_sf"/>
</dbReference>
<dbReference type="InterPro" id="IPR013783">
    <property type="entry name" value="Ig-like_fold"/>
</dbReference>
<dbReference type="PANTHER" id="PTHR13771">
    <property type="entry name" value="INTERCELLULAR ADHESION MOLECULE"/>
    <property type="match status" value="1"/>
</dbReference>
<dbReference type="PANTHER" id="PTHR13771:SF3">
    <property type="entry name" value="INTERCELLULAR ADHESION MOLECULE 2"/>
    <property type="match status" value="1"/>
</dbReference>
<dbReference type="Pfam" id="PF03921">
    <property type="entry name" value="ICAM_N"/>
    <property type="match status" value="1"/>
</dbReference>
<dbReference type="PRINTS" id="PR01473">
    <property type="entry name" value="ICAM"/>
</dbReference>
<dbReference type="PRINTS" id="PR01472">
    <property type="entry name" value="ICAMVCAM1"/>
</dbReference>
<dbReference type="SUPFAM" id="SSF48726">
    <property type="entry name" value="Immunoglobulin"/>
    <property type="match status" value="2"/>
</dbReference>
<proteinExistence type="evidence at transcript level"/>
<name>ICAM2_GORGO</name>
<protein>
    <recommendedName>
        <fullName>Intercellular adhesion molecule 2</fullName>
        <shortName>ICAM-2</shortName>
    </recommendedName>
    <cdAntigenName>CD102</cdAntigenName>
</protein>
<evidence type="ECO:0000250" key="1"/>
<evidence type="ECO:0000250" key="2">
    <source>
        <dbReference type="UniProtKB" id="P13598"/>
    </source>
</evidence>
<evidence type="ECO:0000250" key="3">
    <source>
        <dbReference type="UniProtKB" id="P35330"/>
    </source>
</evidence>
<evidence type="ECO:0000255" key="4"/>
<evidence type="ECO:0000305" key="5"/>
<feature type="signal peptide" evidence="1">
    <location>
        <begin position="1"/>
        <end position="24"/>
    </location>
</feature>
<feature type="chain" id="PRO_0000014789" description="Intercellular adhesion molecule 2">
    <location>
        <begin position="25"/>
        <end position="275"/>
    </location>
</feature>
<feature type="topological domain" description="Extracellular" evidence="4">
    <location>
        <begin position="25"/>
        <end position="223"/>
    </location>
</feature>
<feature type="transmembrane region" description="Helical" evidence="4">
    <location>
        <begin position="224"/>
        <end position="248"/>
    </location>
</feature>
<feature type="topological domain" description="Cytoplasmic" evidence="4">
    <location>
        <begin position="249"/>
        <end position="275"/>
    </location>
</feature>
<feature type="domain" description="Ig-like C2-type 1">
    <location>
        <begin position="41"/>
        <end position="98"/>
    </location>
</feature>
<feature type="domain" description="Ig-like C2-type 2">
    <location>
        <begin position="127"/>
        <end position="197"/>
    </location>
</feature>
<feature type="region of interest" description="Required for interaction with EZR, MSN and RDX and co-localization to microvilli" evidence="3">
    <location>
        <begin position="251"/>
        <end position="275"/>
    </location>
</feature>
<feature type="glycosylation site" description="N-linked (GlcNAc...) asparagine" evidence="4">
    <location>
        <position position="47"/>
    </location>
</feature>
<feature type="glycosylation site" description="N-linked (GlcNAc...) asparagine" evidence="4">
    <location>
        <position position="82"/>
    </location>
</feature>
<feature type="glycosylation site" description="N-linked (GlcNAc...) asparagine" evidence="4">
    <location>
        <position position="105"/>
    </location>
</feature>
<feature type="glycosylation site" description="N-linked (GlcNAc...) asparagine" evidence="4">
    <location>
        <position position="153"/>
    </location>
</feature>
<feature type="glycosylation site" description="N-linked (GlcNAc...) asparagine" evidence="4">
    <location>
        <position position="158"/>
    </location>
</feature>
<feature type="glycosylation site" description="N-linked (GlcNAc...) asparagine" evidence="4">
    <location>
        <position position="176"/>
    </location>
</feature>
<feature type="glycosylation site" description="N-linked (GlcNAc...) asparagine" evidence="4">
    <location>
        <position position="187"/>
    </location>
</feature>
<feature type="disulfide bond" evidence="2">
    <location>
        <begin position="48"/>
        <end position="91"/>
    </location>
</feature>
<feature type="disulfide bond" evidence="2">
    <location>
        <begin position="52"/>
        <end position="95"/>
    </location>
</feature>
<feature type="disulfide bond" evidence="2">
    <location>
        <begin position="134"/>
        <end position="190"/>
    </location>
</feature>
<sequence length="275" mass="30578">MSSFGYRTLTVALFALICCPGSDEKVFEVHVRPKKLAVEPKASLEVNCSTTCNQPEVGGLETSLDKILLDEQAQWKHYLVSNISHDTVLQCHFTCSGKQESMNSNVSVYQPPRQVILTLQPTLVAVGKSFTIECRVPTVEPLDSLTLFLFRGNETLHNQTFGKAAPALQEATATFNSTADREDGHRNFSCLAVLDLISRGGNIFQEHSAPKMLEIYEPVSDSQMVIIVTVVSVLLSLFVTSVLLCFIFGQHLRQQRMGTYGVRAAWRRLPQAFRP</sequence>
<accession>Q5NKV1</accession>
<comment type="function">
    <text evidence="1">ICAM proteins are ligands for the leukocyte adhesion protein LFA-1 (integrin alpha-L/beta-2). ICAM2 may play a role in lymphocyte recirculation by blocking LFA-1-dependent cell adhesion. It mediates adhesive interactions important for antigen-specific immune response, NK-cell mediated clearance, lymphocyte recirculation, and other cellular interactions important for immune response and surveillance (By similarity).</text>
</comment>
<comment type="subunit">
    <text evidence="3">Interacts with RDX, EZR and MSN.</text>
</comment>
<comment type="subcellular location">
    <subcellularLocation>
        <location evidence="4">Membrane</location>
        <topology evidence="4">Single-pass type I membrane protein</topology>
    </subcellularLocation>
    <subcellularLocation>
        <location evidence="3">Cell projection</location>
        <location evidence="3">Microvillus</location>
    </subcellularLocation>
    <text evidence="3">Co-localizes with RDX, EZR and MSN in microvilli.</text>
</comment>
<comment type="similarity">
    <text evidence="5">Belongs to the immunoglobulin superfamily. ICAM family.</text>
</comment>